<gene>
    <name evidence="1" type="primary">purA</name>
    <name type="ordered locus">xcc-b100_3290</name>
</gene>
<evidence type="ECO:0000255" key="1">
    <source>
        <dbReference type="HAMAP-Rule" id="MF_00011"/>
    </source>
</evidence>
<comment type="function">
    <text evidence="1">Plays an important role in the de novo pathway of purine nucleotide biosynthesis. Catalyzes the first committed step in the biosynthesis of AMP from IMP.</text>
</comment>
<comment type="catalytic activity">
    <reaction evidence="1">
        <text>IMP + L-aspartate + GTP = N(6)-(1,2-dicarboxyethyl)-AMP + GDP + phosphate + 2 H(+)</text>
        <dbReference type="Rhea" id="RHEA:15753"/>
        <dbReference type="ChEBI" id="CHEBI:15378"/>
        <dbReference type="ChEBI" id="CHEBI:29991"/>
        <dbReference type="ChEBI" id="CHEBI:37565"/>
        <dbReference type="ChEBI" id="CHEBI:43474"/>
        <dbReference type="ChEBI" id="CHEBI:57567"/>
        <dbReference type="ChEBI" id="CHEBI:58053"/>
        <dbReference type="ChEBI" id="CHEBI:58189"/>
        <dbReference type="EC" id="6.3.4.4"/>
    </reaction>
</comment>
<comment type="cofactor">
    <cofactor evidence="1">
        <name>Mg(2+)</name>
        <dbReference type="ChEBI" id="CHEBI:18420"/>
    </cofactor>
    <text evidence="1">Binds 1 Mg(2+) ion per subunit.</text>
</comment>
<comment type="pathway">
    <text evidence="1">Purine metabolism; AMP biosynthesis via de novo pathway; AMP from IMP: step 1/2.</text>
</comment>
<comment type="subunit">
    <text evidence="1">Homodimer.</text>
</comment>
<comment type="subcellular location">
    <subcellularLocation>
        <location evidence="1">Cytoplasm</location>
    </subcellularLocation>
</comment>
<comment type="similarity">
    <text evidence="1">Belongs to the adenylosuccinate synthetase family.</text>
</comment>
<sequence length="430" mass="46164">MGQSVVVLGAQWGDEGKGKIVDLLTEEIGAVVRFQGGHNAGHTLVINGKKTVLHLIPSGILRDDALCLIGNGVVISPAALIKEIGELESAGVEVRSRLKISPAAPLIMPYHIALDQAREKAAGGKAIGTTGRGIGPAYEDKVARRGIRIADLHYPAQLEELLRTALDYHNFVLTKYLGVEAVDFQKTFDEALAFGEYVQPMKSDVAGILHDLRKQGKRVLFEGAQGALLDIDHGTYPYVTSSNTTVGGALAGTGVGADAIDYVLGIAKAYATRVGGGPFPTELDDEVGQGIRDRGAEYGASTGRPRRCGWMDIVALKRAVAINGISGLCITKLDVLDGMEKLKVCIAYEYRGKRTEYAPLDAQGWEECTPVYLEFPGWTENTHGITEWDKLPVAARAYLRALEELAGCPISIVSTGPDRDHTMVLQDPFA</sequence>
<feature type="chain" id="PRO_1000089352" description="Adenylosuccinate synthetase">
    <location>
        <begin position="1"/>
        <end position="430"/>
    </location>
</feature>
<feature type="active site" description="Proton acceptor" evidence="1">
    <location>
        <position position="14"/>
    </location>
</feature>
<feature type="active site" description="Proton donor" evidence="1">
    <location>
        <position position="42"/>
    </location>
</feature>
<feature type="binding site" evidence="1">
    <location>
        <begin position="13"/>
        <end position="19"/>
    </location>
    <ligand>
        <name>GTP</name>
        <dbReference type="ChEBI" id="CHEBI:37565"/>
    </ligand>
</feature>
<feature type="binding site" description="in other chain" evidence="1">
    <location>
        <begin position="14"/>
        <end position="17"/>
    </location>
    <ligand>
        <name>IMP</name>
        <dbReference type="ChEBI" id="CHEBI:58053"/>
        <note>ligand shared between dimeric partners</note>
    </ligand>
</feature>
<feature type="binding site" evidence="1">
    <location>
        <position position="14"/>
    </location>
    <ligand>
        <name>Mg(2+)</name>
        <dbReference type="ChEBI" id="CHEBI:18420"/>
    </ligand>
</feature>
<feature type="binding site" description="in other chain" evidence="1">
    <location>
        <begin position="39"/>
        <end position="42"/>
    </location>
    <ligand>
        <name>IMP</name>
        <dbReference type="ChEBI" id="CHEBI:58053"/>
        <note>ligand shared between dimeric partners</note>
    </ligand>
</feature>
<feature type="binding site" evidence="1">
    <location>
        <begin position="41"/>
        <end position="43"/>
    </location>
    <ligand>
        <name>GTP</name>
        <dbReference type="ChEBI" id="CHEBI:37565"/>
    </ligand>
</feature>
<feature type="binding site" evidence="1">
    <location>
        <position position="41"/>
    </location>
    <ligand>
        <name>Mg(2+)</name>
        <dbReference type="ChEBI" id="CHEBI:18420"/>
    </ligand>
</feature>
<feature type="binding site" description="in other chain" evidence="1">
    <location>
        <position position="130"/>
    </location>
    <ligand>
        <name>IMP</name>
        <dbReference type="ChEBI" id="CHEBI:58053"/>
        <note>ligand shared between dimeric partners</note>
    </ligand>
</feature>
<feature type="binding site" evidence="1">
    <location>
        <position position="144"/>
    </location>
    <ligand>
        <name>IMP</name>
        <dbReference type="ChEBI" id="CHEBI:58053"/>
        <note>ligand shared between dimeric partners</note>
    </ligand>
</feature>
<feature type="binding site" description="in other chain" evidence="1">
    <location>
        <position position="225"/>
    </location>
    <ligand>
        <name>IMP</name>
        <dbReference type="ChEBI" id="CHEBI:58053"/>
        <note>ligand shared between dimeric partners</note>
    </ligand>
</feature>
<feature type="binding site" description="in other chain" evidence="1">
    <location>
        <position position="240"/>
    </location>
    <ligand>
        <name>IMP</name>
        <dbReference type="ChEBI" id="CHEBI:58053"/>
        <note>ligand shared between dimeric partners</note>
    </ligand>
</feature>
<feature type="binding site" evidence="1">
    <location>
        <begin position="300"/>
        <end position="306"/>
    </location>
    <ligand>
        <name>substrate</name>
    </ligand>
</feature>
<feature type="binding site" description="in other chain" evidence="1">
    <location>
        <position position="304"/>
    </location>
    <ligand>
        <name>IMP</name>
        <dbReference type="ChEBI" id="CHEBI:58053"/>
        <note>ligand shared between dimeric partners</note>
    </ligand>
</feature>
<feature type="binding site" evidence="1">
    <location>
        <position position="306"/>
    </location>
    <ligand>
        <name>GTP</name>
        <dbReference type="ChEBI" id="CHEBI:37565"/>
    </ligand>
</feature>
<feature type="binding site" evidence="1">
    <location>
        <begin position="332"/>
        <end position="334"/>
    </location>
    <ligand>
        <name>GTP</name>
        <dbReference type="ChEBI" id="CHEBI:37565"/>
    </ligand>
</feature>
<feature type="binding site" evidence="1">
    <location>
        <begin position="414"/>
        <end position="416"/>
    </location>
    <ligand>
        <name>GTP</name>
        <dbReference type="ChEBI" id="CHEBI:37565"/>
    </ligand>
</feature>
<name>PURA_XANCB</name>
<accession>B0RYD5</accession>
<organism>
    <name type="scientific">Xanthomonas campestris pv. campestris (strain B100)</name>
    <dbReference type="NCBI Taxonomy" id="509169"/>
    <lineage>
        <taxon>Bacteria</taxon>
        <taxon>Pseudomonadati</taxon>
        <taxon>Pseudomonadota</taxon>
        <taxon>Gammaproteobacteria</taxon>
        <taxon>Lysobacterales</taxon>
        <taxon>Lysobacteraceae</taxon>
        <taxon>Xanthomonas</taxon>
    </lineage>
</organism>
<dbReference type="EC" id="6.3.4.4" evidence="1"/>
<dbReference type="EMBL" id="AM920689">
    <property type="protein sequence ID" value="CAP52655.1"/>
    <property type="molecule type" value="Genomic_DNA"/>
</dbReference>
<dbReference type="SMR" id="B0RYD5"/>
<dbReference type="KEGG" id="xca:xcc-b100_3290"/>
<dbReference type="HOGENOM" id="CLU_029848_0_0_6"/>
<dbReference type="UniPathway" id="UPA00075">
    <property type="reaction ID" value="UER00335"/>
</dbReference>
<dbReference type="Proteomes" id="UP000001188">
    <property type="component" value="Chromosome"/>
</dbReference>
<dbReference type="GO" id="GO:0005737">
    <property type="term" value="C:cytoplasm"/>
    <property type="evidence" value="ECO:0007669"/>
    <property type="project" value="UniProtKB-SubCell"/>
</dbReference>
<dbReference type="GO" id="GO:0004019">
    <property type="term" value="F:adenylosuccinate synthase activity"/>
    <property type="evidence" value="ECO:0007669"/>
    <property type="project" value="UniProtKB-UniRule"/>
</dbReference>
<dbReference type="GO" id="GO:0005525">
    <property type="term" value="F:GTP binding"/>
    <property type="evidence" value="ECO:0007669"/>
    <property type="project" value="UniProtKB-UniRule"/>
</dbReference>
<dbReference type="GO" id="GO:0000287">
    <property type="term" value="F:magnesium ion binding"/>
    <property type="evidence" value="ECO:0007669"/>
    <property type="project" value="UniProtKB-UniRule"/>
</dbReference>
<dbReference type="GO" id="GO:0044208">
    <property type="term" value="P:'de novo' AMP biosynthetic process"/>
    <property type="evidence" value="ECO:0007669"/>
    <property type="project" value="UniProtKB-UniRule"/>
</dbReference>
<dbReference type="GO" id="GO:0046040">
    <property type="term" value="P:IMP metabolic process"/>
    <property type="evidence" value="ECO:0007669"/>
    <property type="project" value="TreeGrafter"/>
</dbReference>
<dbReference type="CDD" id="cd03108">
    <property type="entry name" value="AdSS"/>
    <property type="match status" value="1"/>
</dbReference>
<dbReference type="FunFam" id="1.10.300.10:FF:000001">
    <property type="entry name" value="Adenylosuccinate synthetase"/>
    <property type="match status" value="1"/>
</dbReference>
<dbReference type="FunFam" id="3.90.170.10:FF:000001">
    <property type="entry name" value="Adenylosuccinate synthetase"/>
    <property type="match status" value="1"/>
</dbReference>
<dbReference type="Gene3D" id="3.40.440.10">
    <property type="entry name" value="Adenylosuccinate Synthetase, subunit A, domain 1"/>
    <property type="match status" value="1"/>
</dbReference>
<dbReference type="Gene3D" id="1.10.300.10">
    <property type="entry name" value="Adenylosuccinate Synthetase, subunit A, domain 2"/>
    <property type="match status" value="1"/>
</dbReference>
<dbReference type="Gene3D" id="3.90.170.10">
    <property type="entry name" value="Adenylosuccinate Synthetase, subunit A, domain 3"/>
    <property type="match status" value="1"/>
</dbReference>
<dbReference type="HAMAP" id="MF_00011">
    <property type="entry name" value="Adenylosucc_synth"/>
    <property type="match status" value="1"/>
</dbReference>
<dbReference type="InterPro" id="IPR018220">
    <property type="entry name" value="Adenylosuccin_syn_GTP-bd"/>
</dbReference>
<dbReference type="InterPro" id="IPR033128">
    <property type="entry name" value="Adenylosuccin_syn_Lys_AS"/>
</dbReference>
<dbReference type="InterPro" id="IPR042109">
    <property type="entry name" value="Adenylosuccinate_synth_dom1"/>
</dbReference>
<dbReference type="InterPro" id="IPR042110">
    <property type="entry name" value="Adenylosuccinate_synth_dom2"/>
</dbReference>
<dbReference type="InterPro" id="IPR042111">
    <property type="entry name" value="Adenylosuccinate_synth_dom3"/>
</dbReference>
<dbReference type="InterPro" id="IPR001114">
    <property type="entry name" value="Adenylosuccinate_synthetase"/>
</dbReference>
<dbReference type="InterPro" id="IPR027417">
    <property type="entry name" value="P-loop_NTPase"/>
</dbReference>
<dbReference type="NCBIfam" id="NF002223">
    <property type="entry name" value="PRK01117.1"/>
    <property type="match status" value="1"/>
</dbReference>
<dbReference type="NCBIfam" id="TIGR00184">
    <property type="entry name" value="purA"/>
    <property type="match status" value="1"/>
</dbReference>
<dbReference type="PANTHER" id="PTHR11846">
    <property type="entry name" value="ADENYLOSUCCINATE SYNTHETASE"/>
    <property type="match status" value="1"/>
</dbReference>
<dbReference type="PANTHER" id="PTHR11846:SF0">
    <property type="entry name" value="ADENYLOSUCCINATE SYNTHETASE"/>
    <property type="match status" value="1"/>
</dbReference>
<dbReference type="Pfam" id="PF00709">
    <property type="entry name" value="Adenylsucc_synt"/>
    <property type="match status" value="1"/>
</dbReference>
<dbReference type="SMART" id="SM00788">
    <property type="entry name" value="Adenylsucc_synt"/>
    <property type="match status" value="1"/>
</dbReference>
<dbReference type="SUPFAM" id="SSF52540">
    <property type="entry name" value="P-loop containing nucleoside triphosphate hydrolases"/>
    <property type="match status" value="1"/>
</dbReference>
<dbReference type="PROSITE" id="PS01266">
    <property type="entry name" value="ADENYLOSUCCIN_SYN_1"/>
    <property type="match status" value="1"/>
</dbReference>
<dbReference type="PROSITE" id="PS00513">
    <property type="entry name" value="ADENYLOSUCCIN_SYN_2"/>
    <property type="match status" value="1"/>
</dbReference>
<protein>
    <recommendedName>
        <fullName evidence="1">Adenylosuccinate synthetase</fullName>
        <shortName evidence="1">AMPSase</shortName>
        <shortName evidence="1">AdSS</shortName>
        <ecNumber evidence="1">6.3.4.4</ecNumber>
    </recommendedName>
    <alternativeName>
        <fullName evidence="1">IMP--aspartate ligase</fullName>
    </alternativeName>
</protein>
<proteinExistence type="inferred from homology"/>
<reference key="1">
    <citation type="journal article" date="2008" name="J. Biotechnol.">
        <title>The genome of Xanthomonas campestris pv. campestris B100 and its use for the reconstruction of metabolic pathways involved in xanthan biosynthesis.</title>
        <authorList>
            <person name="Vorhoelter F.-J."/>
            <person name="Schneiker S."/>
            <person name="Goesmann A."/>
            <person name="Krause L."/>
            <person name="Bekel T."/>
            <person name="Kaiser O."/>
            <person name="Linke B."/>
            <person name="Patschkowski T."/>
            <person name="Rueckert C."/>
            <person name="Schmid J."/>
            <person name="Sidhu V.K."/>
            <person name="Sieber V."/>
            <person name="Tauch A."/>
            <person name="Watt S.A."/>
            <person name="Weisshaar B."/>
            <person name="Becker A."/>
            <person name="Niehaus K."/>
            <person name="Puehler A."/>
        </authorList>
    </citation>
    <scope>NUCLEOTIDE SEQUENCE [LARGE SCALE GENOMIC DNA]</scope>
    <source>
        <strain>B100</strain>
    </source>
</reference>
<keyword id="KW-0963">Cytoplasm</keyword>
<keyword id="KW-0342">GTP-binding</keyword>
<keyword id="KW-0436">Ligase</keyword>
<keyword id="KW-0460">Magnesium</keyword>
<keyword id="KW-0479">Metal-binding</keyword>
<keyword id="KW-0547">Nucleotide-binding</keyword>
<keyword id="KW-0658">Purine biosynthesis</keyword>